<sequence length="363" mass="41259">MVQRMTFDAASYTAQLQDKVTRLRDLLAPFDAPEPQVFDSPLQNFRLRAEFRLWREGGERHYAMFSQDDKRTPILIEEFPIASLRINQLMPQLKAAWQASAALSHKLFQVEFLTTLAGDAMITLCYHRPLDEHWHTAANKLAADLNVSIIGRSKGKRDVIGRDYVVEKLDVGGRTFSYRQPEGAFTQPNGTVNQKMLNWAFEALGDRSDDLLELYCGNGNFTLPLATRVRKVLATEISKTSVNAALSNLDENAVDNVTLVRLSAEELTEALNEVRPFRRLHGIDLKSYEFGSVFVDPPRAGMDPDTCELTRRFENILYISCNPETLAANIAQLHDTHRITQCAMFDQFPWTHHMESGVLLTRR</sequence>
<evidence type="ECO:0000255" key="1">
    <source>
        <dbReference type="HAMAP-Rule" id="MF_01011"/>
    </source>
</evidence>
<accession>Q9RHS9</accession>
<dbReference type="EC" id="2.1.1.-" evidence="1"/>
<dbReference type="EC" id="2.1.1.35" evidence="1"/>
<dbReference type="EMBL" id="AB023289">
    <property type="protein sequence ID" value="BAA88495.1"/>
    <property type="molecule type" value="Genomic_DNA"/>
</dbReference>
<dbReference type="SMR" id="Q9RHS9"/>
<dbReference type="eggNOG" id="COG2265">
    <property type="taxonomic scope" value="Bacteria"/>
</dbReference>
<dbReference type="GO" id="GO:0005829">
    <property type="term" value="C:cytosol"/>
    <property type="evidence" value="ECO:0007669"/>
    <property type="project" value="TreeGrafter"/>
</dbReference>
<dbReference type="GO" id="GO:0019843">
    <property type="term" value="F:rRNA binding"/>
    <property type="evidence" value="ECO:0007669"/>
    <property type="project" value="TreeGrafter"/>
</dbReference>
<dbReference type="GO" id="GO:0030697">
    <property type="term" value="F:tRNA (uracil(54)-C5)-methyltransferase activity, S-adenosyl methionine-dependent"/>
    <property type="evidence" value="ECO:0007669"/>
    <property type="project" value="UniProtKB-UniRule"/>
</dbReference>
<dbReference type="GO" id="GO:0000049">
    <property type="term" value="F:tRNA binding"/>
    <property type="evidence" value="ECO:0007669"/>
    <property type="project" value="TreeGrafter"/>
</dbReference>
<dbReference type="GO" id="GO:0030488">
    <property type="term" value="P:tRNA methylation"/>
    <property type="evidence" value="ECO:0007669"/>
    <property type="project" value="UniProtKB-UniRule"/>
</dbReference>
<dbReference type="CDD" id="cd02440">
    <property type="entry name" value="AdoMet_MTases"/>
    <property type="match status" value="1"/>
</dbReference>
<dbReference type="FunFam" id="2.40.50.1070:FF:000001">
    <property type="entry name" value="tRNA/tmRNA (uracil-C(5))-methyltransferase"/>
    <property type="match status" value="1"/>
</dbReference>
<dbReference type="FunFam" id="3.40.50.150:FF:000012">
    <property type="entry name" value="tRNA/tmRNA (uracil-C(5))-methyltransferase"/>
    <property type="match status" value="1"/>
</dbReference>
<dbReference type="Gene3D" id="2.40.50.1070">
    <property type="match status" value="1"/>
</dbReference>
<dbReference type="Gene3D" id="3.40.50.150">
    <property type="entry name" value="Vaccinia Virus protein VP39"/>
    <property type="match status" value="1"/>
</dbReference>
<dbReference type="HAMAP" id="MF_01011">
    <property type="entry name" value="RNA_methyltr_TrmA"/>
    <property type="match status" value="1"/>
</dbReference>
<dbReference type="InterPro" id="IPR030390">
    <property type="entry name" value="MeTrfase_TrmA_AS"/>
</dbReference>
<dbReference type="InterPro" id="IPR030391">
    <property type="entry name" value="MeTrfase_TrmA_CS"/>
</dbReference>
<dbReference type="InterPro" id="IPR029063">
    <property type="entry name" value="SAM-dependent_MTases_sf"/>
</dbReference>
<dbReference type="InterPro" id="IPR011869">
    <property type="entry name" value="TrmA_MeTrfase"/>
</dbReference>
<dbReference type="InterPro" id="IPR010280">
    <property type="entry name" value="U5_MeTrfase_fam"/>
</dbReference>
<dbReference type="NCBIfam" id="TIGR02143">
    <property type="entry name" value="trmA_only"/>
    <property type="match status" value="1"/>
</dbReference>
<dbReference type="PANTHER" id="PTHR47790">
    <property type="entry name" value="TRNA/TMRNA (URACIL-C(5))-METHYLTRANSFERASE"/>
    <property type="match status" value="1"/>
</dbReference>
<dbReference type="PANTHER" id="PTHR47790:SF2">
    <property type="entry name" value="TRNA_TMRNA (URACIL-C(5))-METHYLTRANSFERASE"/>
    <property type="match status" value="1"/>
</dbReference>
<dbReference type="Pfam" id="PF05958">
    <property type="entry name" value="tRNA_U5-meth_tr"/>
    <property type="match status" value="1"/>
</dbReference>
<dbReference type="SUPFAM" id="SSF53335">
    <property type="entry name" value="S-adenosyl-L-methionine-dependent methyltransferases"/>
    <property type="match status" value="1"/>
</dbReference>
<dbReference type="PROSITE" id="PS51687">
    <property type="entry name" value="SAM_MT_RNA_M5U"/>
    <property type="match status" value="1"/>
</dbReference>
<dbReference type="PROSITE" id="PS01230">
    <property type="entry name" value="TRMA_1"/>
    <property type="match status" value="1"/>
</dbReference>
<dbReference type="PROSITE" id="PS01231">
    <property type="entry name" value="TRMA_2"/>
    <property type="match status" value="1"/>
</dbReference>
<feature type="chain" id="PRO_0000161873" description="tRNA/tmRNA (uracil-C(5))-methyltransferase">
    <location>
        <begin position="1"/>
        <end position="363"/>
    </location>
</feature>
<feature type="active site" description="Nucleophile" evidence="1">
    <location>
        <position position="321"/>
    </location>
</feature>
<feature type="active site" description="Proton acceptor" evidence="1">
    <location>
        <position position="355"/>
    </location>
</feature>
<feature type="binding site" evidence="1">
    <location>
        <position position="187"/>
    </location>
    <ligand>
        <name>S-adenosyl-L-methionine</name>
        <dbReference type="ChEBI" id="CHEBI:59789"/>
    </ligand>
</feature>
<feature type="binding site" evidence="1">
    <location>
        <position position="215"/>
    </location>
    <ligand>
        <name>S-adenosyl-L-methionine</name>
        <dbReference type="ChEBI" id="CHEBI:59789"/>
    </ligand>
</feature>
<feature type="binding site" evidence="1">
    <location>
        <position position="220"/>
    </location>
    <ligand>
        <name>S-adenosyl-L-methionine</name>
        <dbReference type="ChEBI" id="CHEBI:59789"/>
    </ligand>
</feature>
<feature type="binding site" evidence="1">
    <location>
        <position position="236"/>
    </location>
    <ligand>
        <name>S-adenosyl-L-methionine</name>
        <dbReference type="ChEBI" id="CHEBI:59789"/>
    </ligand>
</feature>
<feature type="binding site" evidence="1">
    <location>
        <position position="296"/>
    </location>
    <ligand>
        <name>S-adenosyl-L-methionine</name>
        <dbReference type="ChEBI" id="CHEBI:59789"/>
    </ligand>
</feature>
<reference key="1">
    <citation type="journal article" date="1999" name="J. Bacteriol.">
        <title>Cloning and characterization of the Pseudomonas fluorescens ATP-binding cassette exporter, HasDEF, for the heme acquisition protein HasA.</title>
        <authorList>
            <person name="Idei A."/>
            <person name="Kawai E."/>
            <person name="Akatsuka H."/>
            <person name="Omori K."/>
        </authorList>
    </citation>
    <scope>NUCLEOTIDE SEQUENCE [GENOMIC DNA]</scope>
    <source>
        <strain>No. 33</strain>
    </source>
</reference>
<keyword id="KW-0489">Methyltransferase</keyword>
<keyword id="KW-0949">S-adenosyl-L-methionine</keyword>
<keyword id="KW-0808">Transferase</keyword>
<keyword id="KW-0819">tRNA processing</keyword>
<organism>
    <name type="scientific">Pseudomonas fluorescens</name>
    <dbReference type="NCBI Taxonomy" id="294"/>
    <lineage>
        <taxon>Bacteria</taxon>
        <taxon>Pseudomonadati</taxon>
        <taxon>Pseudomonadota</taxon>
        <taxon>Gammaproteobacteria</taxon>
        <taxon>Pseudomonadales</taxon>
        <taxon>Pseudomonadaceae</taxon>
        <taxon>Pseudomonas</taxon>
    </lineage>
</organism>
<protein>
    <recommendedName>
        <fullName evidence="1">tRNA/tmRNA (uracil-C(5))-methyltransferase</fullName>
        <ecNumber evidence="1">2.1.1.-</ecNumber>
        <ecNumber evidence="1">2.1.1.35</ecNumber>
    </recommendedName>
    <alternativeName>
        <fullName evidence="1">tRNA (uracil(54)-C(5))-methyltransferase</fullName>
    </alternativeName>
    <alternativeName>
        <fullName evidence="1">tRNA(m5U54)-methyltransferase</fullName>
        <shortName evidence="1">RUMT</shortName>
    </alternativeName>
    <alternativeName>
        <fullName evidence="1">tmRNA (uracil(341)-C(5))-methyltransferase</fullName>
    </alternativeName>
</protein>
<proteinExistence type="inferred from homology"/>
<gene>
    <name evidence="1" type="primary">trmA</name>
</gene>
<name>TRMA_PSEFL</name>
<comment type="function">
    <text evidence="1">Dual-specificity methyltransferase that catalyzes the formation of 5-methyluridine at position 54 (m5U54) in all tRNAs, and that of position 341 (m5U341) in tmRNA (transfer-mRNA).</text>
</comment>
<comment type="catalytic activity">
    <reaction evidence="1">
        <text>uridine(54) in tRNA + S-adenosyl-L-methionine = 5-methyluridine(54) in tRNA + S-adenosyl-L-homocysteine + H(+)</text>
        <dbReference type="Rhea" id="RHEA:42712"/>
        <dbReference type="Rhea" id="RHEA-COMP:10167"/>
        <dbReference type="Rhea" id="RHEA-COMP:10193"/>
        <dbReference type="ChEBI" id="CHEBI:15378"/>
        <dbReference type="ChEBI" id="CHEBI:57856"/>
        <dbReference type="ChEBI" id="CHEBI:59789"/>
        <dbReference type="ChEBI" id="CHEBI:65315"/>
        <dbReference type="ChEBI" id="CHEBI:74447"/>
        <dbReference type="EC" id="2.1.1.35"/>
    </reaction>
</comment>
<comment type="catalytic activity">
    <reaction evidence="1">
        <text>uridine(341) in tmRNA + S-adenosyl-L-methionine = 5-methyluridine(341) in tmRNA + S-adenosyl-L-homocysteine + H(+)</text>
        <dbReference type="Rhea" id="RHEA:43612"/>
        <dbReference type="Rhea" id="RHEA-COMP:10630"/>
        <dbReference type="Rhea" id="RHEA-COMP:10631"/>
        <dbReference type="ChEBI" id="CHEBI:15378"/>
        <dbReference type="ChEBI" id="CHEBI:57856"/>
        <dbReference type="ChEBI" id="CHEBI:59789"/>
        <dbReference type="ChEBI" id="CHEBI:65315"/>
        <dbReference type="ChEBI" id="CHEBI:74447"/>
    </reaction>
</comment>
<comment type="similarity">
    <text evidence="1">Belongs to the class I-like SAM-binding methyltransferase superfamily. RNA M5U methyltransferase family. TrmA subfamily.</text>
</comment>